<reference key="1">
    <citation type="journal article" date="2006" name="Environ. Microbiol.">
        <title>Whole genome analysis of the marine Bacteroidetes'Gramella forsetii' reveals adaptations to degradation of polymeric organic matter.</title>
        <authorList>
            <person name="Bauer M."/>
            <person name="Kube M."/>
            <person name="Teeling H."/>
            <person name="Richter M."/>
            <person name="Lombardot T."/>
            <person name="Allers E."/>
            <person name="Wuerdemann C.A."/>
            <person name="Quast C."/>
            <person name="Kuhl H."/>
            <person name="Knaust F."/>
            <person name="Woebken D."/>
            <person name="Bischof K."/>
            <person name="Mussmann M."/>
            <person name="Choudhuri J.V."/>
            <person name="Meyer F."/>
            <person name="Reinhardt R."/>
            <person name="Amann R.I."/>
            <person name="Gloeckner F.O."/>
        </authorList>
    </citation>
    <scope>NUCLEOTIDE SEQUENCE [LARGE SCALE GENOMIC DNA]</scope>
    <source>
        <strain>DSM 17595 / CGMCC 1.15422 / KT0803</strain>
    </source>
</reference>
<gene>
    <name evidence="1" type="primary">purA</name>
    <name type="ordered locus">GFO_0776</name>
</gene>
<sequence length="423" mass="46771">MAVDLLLGLQWGDEGKGKIVDVLTSKYDIIARFQGGPNAGHTLEFDGQKHVLHTIPSGIFHDDSINLVGNGVVIDPVIFKRELDNLAKHKIDYKSKLVISRKAHLILPTHRLLDAASEASKGKAKIGSTLKGIGPTYMDKTGRNGLRVGDLELEDWKDRYRALADKHEKMIAFYDVDVQYDLKELEKEFCTAVDTLKELTFIDSEEYLHQAMKSGKSILAEGAQGSLLDIDFGTYPFVTSSNTTAAGACTGLGVAPREIGEAFGIFKAYTTRVGSGPFPTELFDEVGERMGKVGNEFGATTGRKRRCGWLDLVALKYAVQVNGITQLIMMKGDVLSGFDTLKVCTAYKYKGKEITHLPFNIESGNIEPVYTEVKGWEEDLTKMTDASSLPKEFNEYVDFLEKELETPITIVSVGPDRKQTITR</sequence>
<name>PURA_CHRFK</name>
<accession>A0LZF7</accession>
<comment type="function">
    <text evidence="1">Plays an important role in the de novo pathway of purine nucleotide biosynthesis. Catalyzes the first committed step in the biosynthesis of AMP from IMP.</text>
</comment>
<comment type="catalytic activity">
    <reaction evidence="1">
        <text>IMP + L-aspartate + GTP = N(6)-(1,2-dicarboxyethyl)-AMP + GDP + phosphate + 2 H(+)</text>
        <dbReference type="Rhea" id="RHEA:15753"/>
        <dbReference type="ChEBI" id="CHEBI:15378"/>
        <dbReference type="ChEBI" id="CHEBI:29991"/>
        <dbReference type="ChEBI" id="CHEBI:37565"/>
        <dbReference type="ChEBI" id="CHEBI:43474"/>
        <dbReference type="ChEBI" id="CHEBI:57567"/>
        <dbReference type="ChEBI" id="CHEBI:58053"/>
        <dbReference type="ChEBI" id="CHEBI:58189"/>
        <dbReference type="EC" id="6.3.4.4"/>
    </reaction>
</comment>
<comment type="cofactor">
    <cofactor evidence="1">
        <name>Mg(2+)</name>
        <dbReference type="ChEBI" id="CHEBI:18420"/>
    </cofactor>
    <text evidence="1">Binds 1 Mg(2+) ion per subunit.</text>
</comment>
<comment type="pathway">
    <text evidence="1">Purine metabolism; AMP biosynthesis via de novo pathway; AMP from IMP: step 1/2.</text>
</comment>
<comment type="subunit">
    <text evidence="1">Homodimer.</text>
</comment>
<comment type="subcellular location">
    <subcellularLocation>
        <location evidence="1">Cytoplasm</location>
    </subcellularLocation>
</comment>
<comment type="similarity">
    <text evidence="1">Belongs to the adenylosuccinate synthetase family.</text>
</comment>
<organism>
    <name type="scientific">Christiangramia forsetii (strain DSM 17595 / CGMCC 1.15422 / KT0803)</name>
    <name type="common">Gramella forsetii</name>
    <dbReference type="NCBI Taxonomy" id="411154"/>
    <lineage>
        <taxon>Bacteria</taxon>
        <taxon>Pseudomonadati</taxon>
        <taxon>Bacteroidota</taxon>
        <taxon>Flavobacteriia</taxon>
        <taxon>Flavobacteriales</taxon>
        <taxon>Flavobacteriaceae</taxon>
        <taxon>Christiangramia</taxon>
    </lineage>
</organism>
<proteinExistence type="inferred from homology"/>
<feature type="chain" id="PRO_1000000830" description="Adenylosuccinate synthetase">
    <location>
        <begin position="1"/>
        <end position="423"/>
    </location>
</feature>
<feature type="active site" description="Proton acceptor" evidence="1">
    <location>
        <position position="13"/>
    </location>
</feature>
<feature type="active site" description="Proton donor" evidence="1">
    <location>
        <position position="41"/>
    </location>
</feature>
<feature type="binding site" evidence="1">
    <location>
        <begin position="12"/>
        <end position="18"/>
    </location>
    <ligand>
        <name>GTP</name>
        <dbReference type="ChEBI" id="CHEBI:37565"/>
    </ligand>
</feature>
<feature type="binding site" description="in other chain" evidence="1">
    <location>
        <begin position="13"/>
        <end position="16"/>
    </location>
    <ligand>
        <name>IMP</name>
        <dbReference type="ChEBI" id="CHEBI:58053"/>
        <note>ligand shared between dimeric partners</note>
    </ligand>
</feature>
<feature type="binding site" evidence="1">
    <location>
        <position position="13"/>
    </location>
    <ligand>
        <name>Mg(2+)</name>
        <dbReference type="ChEBI" id="CHEBI:18420"/>
    </ligand>
</feature>
<feature type="binding site" description="in other chain" evidence="1">
    <location>
        <begin position="38"/>
        <end position="41"/>
    </location>
    <ligand>
        <name>IMP</name>
        <dbReference type="ChEBI" id="CHEBI:58053"/>
        <note>ligand shared between dimeric partners</note>
    </ligand>
</feature>
<feature type="binding site" evidence="1">
    <location>
        <begin position="40"/>
        <end position="42"/>
    </location>
    <ligand>
        <name>GTP</name>
        <dbReference type="ChEBI" id="CHEBI:37565"/>
    </ligand>
</feature>
<feature type="binding site" evidence="1">
    <location>
        <position position="40"/>
    </location>
    <ligand>
        <name>Mg(2+)</name>
        <dbReference type="ChEBI" id="CHEBI:18420"/>
    </ligand>
</feature>
<feature type="binding site" description="in other chain" evidence="1">
    <location>
        <position position="129"/>
    </location>
    <ligand>
        <name>IMP</name>
        <dbReference type="ChEBI" id="CHEBI:58053"/>
        <note>ligand shared between dimeric partners</note>
    </ligand>
</feature>
<feature type="binding site" evidence="1">
    <location>
        <position position="143"/>
    </location>
    <ligand>
        <name>IMP</name>
        <dbReference type="ChEBI" id="CHEBI:58053"/>
        <note>ligand shared between dimeric partners</note>
    </ligand>
</feature>
<feature type="binding site" description="in other chain" evidence="1">
    <location>
        <position position="224"/>
    </location>
    <ligand>
        <name>IMP</name>
        <dbReference type="ChEBI" id="CHEBI:58053"/>
        <note>ligand shared between dimeric partners</note>
    </ligand>
</feature>
<feature type="binding site" description="in other chain" evidence="1">
    <location>
        <position position="239"/>
    </location>
    <ligand>
        <name>IMP</name>
        <dbReference type="ChEBI" id="CHEBI:58053"/>
        <note>ligand shared between dimeric partners</note>
    </ligand>
</feature>
<feature type="binding site" evidence="1">
    <location>
        <begin position="299"/>
        <end position="305"/>
    </location>
    <ligand>
        <name>substrate</name>
    </ligand>
</feature>
<feature type="binding site" description="in other chain" evidence="1">
    <location>
        <position position="303"/>
    </location>
    <ligand>
        <name>IMP</name>
        <dbReference type="ChEBI" id="CHEBI:58053"/>
        <note>ligand shared between dimeric partners</note>
    </ligand>
</feature>
<feature type="binding site" evidence="1">
    <location>
        <position position="305"/>
    </location>
    <ligand>
        <name>GTP</name>
        <dbReference type="ChEBI" id="CHEBI:37565"/>
    </ligand>
</feature>
<feature type="binding site" evidence="1">
    <location>
        <begin position="331"/>
        <end position="333"/>
    </location>
    <ligand>
        <name>GTP</name>
        <dbReference type="ChEBI" id="CHEBI:37565"/>
    </ligand>
</feature>
<feature type="binding site" evidence="1">
    <location>
        <begin position="412"/>
        <end position="414"/>
    </location>
    <ligand>
        <name>GTP</name>
        <dbReference type="ChEBI" id="CHEBI:37565"/>
    </ligand>
</feature>
<dbReference type="EC" id="6.3.4.4" evidence="1"/>
<dbReference type="EMBL" id="CU207366">
    <property type="protein sequence ID" value="CAL65752.1"/>
    <property type="molecule type" value="Genomic_DNA"/>
</dbReference>
<dbReference type="RefSeq" id="WP_011708689.1">
    <property type="nucleotide sequence ID" value="NC_008571.1"/>
</dbReference>
<dbReference type="SMR" id="A0LZF7"/>
<dbReference type="STRING" id="411154.GFO_0776"/>
<dbReference type="KEGG" id="gfo:GFO_0776"/>
<dbReference type="eggNOG" id="COG0104">
    <property type="taxonomic scope" value="Bacteria"/>
</dbReference>
<dbReference type="HOGENOM" id="CLU_029848_0_0_10"/>
<dbReference type="OrthoDB" id="9807553at2"/>
<dbReference type="UniPathway" id="UPA00075">
    <property type="reaction ID" value="UER00335"/>
</dbReference>
<dbReference type="Proteomes" id="UP000000755">
    <property type="component" value="Chromosome"/>
</dbReference>
<dbReference type="GO" id="GO:0005737">
    <property type="term" value="C:cytoplasm"/>
    <property type="evidence" value="ECO:0007669"/>
    <property type="project" value="UniProtKB-SubCell"/>
</dbReference>
<dbReference type="GO" id="GO:0004019">
    <property type="term" value="F:adenylosuccinate synthase activity"/>
    <property type="evidence" value="ECO:0007669"/>
    <property type="project" value="UniProtKB-UniRule"/>
</dbReference>
<dbReference type="GO" id="GO:0005525">
    <property type="term" value="F:GTP binding"/>
    <property type="evidence" value="ECO:0007669"/>
    <property type="project" value="UniProtKB-UniRule"/>
</dbReference>
<dbReference type="GO" id="GO:0000287">
    <property type="term" value="F:magnesium ion binding"/>
    <property type="evidence" value="ECO:0007669"/>
    <property type="project" value="UniProtKB-UniRule"/>
</dbReference>
<dbReference type="GO" id="GO:0044208">
    <property type="term" value="P:'de novo' AMP biosynthetic process"/>
    <property type="evidence" value="ECO:0007669"/>
    <property type="project" value="UniProtKB-UniRule"/>
</dbReference>
<dbReference type="GO" id="GO:0046040">
    <property type="term" value="P:IMP metabolic process"/>
    <property type="evidence" value="ECO:0007669"/>
    <property type="project" value="TreeGrafter"/>
</dbReference>
<dbReference type="CDD" id="cd03108">
    <property type="entry name" value="AdSS"/>
    <property type="match status" value="1"/>
</dbReference>
<dbReference type="FunFam" id="1.10.300.10:FF:000001">
    <property type="entry name" value="Adenylosuccinate synthetase"/>
    <property type="match status" value="1"/>
</dbReference>
<dbReference type="FunFam" id="3.90.170.10:FF:000001">
    <property type="entry name" value="Adenylosuccinate synthetase"/>
    <property type="match status" value="1"/>
</dbReference>
<dbReference type="Gene3D" id="3.40.440.10">
    <property type="entry name" value="Adenylosuccinate Synthetase, subunit A, domain 1"/>
    <property type="match status" value="1"/>
</dbReference>
<dbReference type="Gene3D" id="1.10.300.10">
    <property type="entry name" value="Adenylosuccinate Synthetase, subunit A, domain 2"/>
    <property type="match status" value="1"/>
</dbReference>
<dbReference type="Gene3D" id="3.90.170.10">
    <property type="entry name" value="Adenylosuccinate Synthetase, subunit A, domain 3"/>
    <property type="match status" value="1"/>
</dbReference>
<dbReference type="HAMAP" id="MF_00011">
    <property type="entry name" value="Adenylosucc_synth"/>
    <property type="match status" value="1"/>
</dbReference>
<dbReference type="InterPro" id="IPR018220">
    <property type="entry name" value="Adenylosuccin_syn_GTP-bd"/>
</dbReference>
<dbReference type="InterPro" id="IPR033128">
    <property type="entry name" value="Adenylosuccin_syn_Lys_AS"/>
</dbReference>
<dbReference type="InterPro" id="IPR042109">
    <property type="entry name" value="Adenylosuccinate_synth_dom1"/>
</dbReference>
<dbReference type="InterPro" id="IPR042110">
    <property type="entry name" value="Adenylosuccinate_synth_dom2"/>
</dbReference>
<dbReference type="InterPro" id="IPR042111">
    <property type="entry name" value="Adenylosuccinate_synth_dom3"/>
</dbReference>
<dbReference type="InterPro" id="IPR001114">
    <property type="entry name" value="Adenylosuccinate_synthetase"/>
</dbReference>
<dbReference type="InterPro" id="IPR027417">
    <property type="entry name" value="P-loop_NTPase"/>
</dbReference>
<dbReference type="NCBIfam" id="NF002223">
    <property type="entry name" value="PRK01117.1"/>
    <property type="match status" value="1"/>
</dbReference>
<dbReference type="NCBIfam" id="TIGR00184">
    <property type="entry name" value="purA"/>
    <property type="match status" value="1"/>
</dbReference>
<dbReference type="PANTHER" id="PTHR11846">
    <property type="entry name" value="ADENYLOSUCCINATE SYNTHETASE"/>
    <property type="match status" value="1"/>
</dbReference>
<dbReference type="PANTHER" id="PTHR11846:SF0">
    <property type="entry name" value="ADENYLOSUCCINATE SYNTHETASE"/>
    <property type="match status" value="1"/>
</dbReference>
<dbReference type="Pfam" id="PF00709">
    <property type="entry name" value="Adenylsucc_synt"/>
    <property type="match status" value="1"/>
</dbReference>
<dbReference type="SMART" id="SM00788">
    <property type="entry name" value="Adenylsucc_synt"/>
    <property type="match status" value="1"/>
</dbReference>
<dbReference type="SUPFAM" id="SSF52540">
    <property type="entry name" value="P-loop containing nucleoside triphosphate hydrolases"/>
    <property type="match status" value="1"/>
</dbReference>
<dbReference type="PROSITE" id="PS01266">
    <property type="entry name" value="ADENYLOSUCCIN_SYN_1"/>
    <property type="match status" value="1"/>
</dbReference>
<dbReference type="PROSITE" id="PS00513">
    <property type="entry name" value="ADENYLOSUCCIN_SYN_2"/>
    <property type="match status" value="1"/>
</dbReference>
<keyword id="KW-0963">Cytoplasm</keyword>
<keyword id="KW-0342">GTP-binding</keyword>
<keyword id="KW-0436">Ligase</keyword>
<keyword id="KW-0460">Magnesium</keyword>
<keyword id="KW-0479">Metal-binding</keyword>
<keyword id="KW-0547">Nucleotide-binding</keyword>
<keyword id="KW-0658">Purine biosynthesis</keyword>
<evidence type="ECO:0000255" key="1">
    <source>
        <dbReference type="HAMAP-Rule" id="MF_00011"/>
    </source>
</evidence>
<protein>
    <recommendedName>
        <fullName evidence="1">Adenylosuccinate synthetase</fullName>
        <shortName evidence="1">AMPSase</shortName>
        <shortName evidence="1">AdSS</shortName>
        <ecNumber evidence="1">6.3.4.4</ecNumber>
    </recommendedName>
    <alternativeName>
        <fullName evidence="1">IMP--aspartate ligase</fullName>
    </alternativeName>
</protein>